<protein>
    <recommendedName>
        <fullName evidence="1">Proline--tRNA ligase</fullName>
        <ecNumber evidence="1">6.1.1.15</ecNumber>
    </recommendedName>
    <alternativeName>
        <fullName evidence="1">Prolyl-tRNA synthetase</fullName>
        <shortName evidence="1">ProRS</shortName>
    </alternativeName>
</protein>
<organism>
    <name type="scientific">Shewanella baltica (strain OS195)</name>
    <dbReference type="NCBI Taxonomy" id="399599"/>
    <lineage>
        <taxon>Bacteria</taxon>
        <taxon>Pseudomonadati</taxon>
        <taxon>Pseudomonadota</taxon>
        <taxon>Gammaproteobacteria</taxon>
        <taxon>Alteromonadales</taxon>
        <taxon>Shewanellaceae</taxon>
        <taxon>Shewanella</taxon>
    </lineage>
</organism>
<comment type="function">
    <text evidence="1">Catalyzes the attachment of proline to tRNA(Pro) in a two-step reaction: proline is first activated by ATP to form Pro-AMP and then transferred to the acceptor end of tRNA(Pro). As ProRS can inadvertently accommodate and process non-cognate amino acids such as alanine and cysteine, to avoid such errors it has two additional distinct editing activities against alanine. One activity is designated as 'pretransfer' editing and involves the tRNA(Pro)-independent hydrolysis of activated Ala-AMP. The other activity is designated 'posttransfer' editing and involves deacylation of mischarged Ala-tRNA(Pro). The misacylated Cys-tRNA(Pro) is not edited by ProRS.</text>
</comment>
<comment type="catalytic activity">
    <reaction evidence="1">
        <text>tRNA(Pro) + L-proline + ATP = L-prolyl-tRNA(Pro) + AMP + diphosphate</text>
        <dbReference type="Rhea" id="RHEA:14305"/>
        <dbReference type="Rhea" id="RHEA-COMP:9700"/>
        <dbReference type="Rhea" id="RHEA-COMP:9702"/>
        <dbReference type="ChEBI" id="CHEBI:30616"/>
        <dbReference type="ChEBI" id="CHEBI:33019"/>
        <dbReference type="ChEBI" id="CHEBI:60039"/>
        <dbReference type="ChEBI" id="CHEBI:78442"/>
        <dbReference type="ChEBI" id="CHEBI:78532"/>
        <dbReference type="ChEBI" id="CHEBI:456215"/>
        <dbReference type="EC" id="6.1.1.15"/>
    </reaction>
</comment>
<comment type="subunit">
    <text evidence="1">Homodimer.</text>
</comment>
<comment type="subcellular location">
    <subcellularLocation>
        <location evidence="1">Cytoplasm</location>
    </subcellularLocation>
</comment>
<comment type="domain">
    <text evidence="1">Consists of three domains: the N-terminal catalytic domain, the editing domain and the C-terminal anticodon-binding domain.</text>
</comment>
<comment type="similarity">
    <text evidence="1">Belongs to the class-II aminoacyl-tRNA synthetase family. ProS type 1 subfamily.</text>
</comment>
<name>SYP_SHEB9</name>
<sequence>MRVSKYLLSTQKETPANAEVISHQLMLRAGMIRRNASGLYSYLPTGLRVLRKVEAIVREEMNKAGAIEILMPMVQPADLWVETGRWEKFGPELLRFKDRHNRDFVLGPTHEEVITDLIRKEVSSYKQLPLNLYQIQTKFRDEVRPRFGMMRSREFLMKDAYSFHLDVDTMNETYEAMYNAYSNILTRMGLAFRPVLADTGSIGGSMSHEFHVLAQSGEDLIAYSTGSDYAANIEKAESPVPTEPRGAATEELCLVDTPNAKTIAELVEQFDLDITKTVKTLIVVGASEATPLVALIVRGDHELNEVKADKLDLVASPVEMAPEALIRDAIGAGPGSLGPIGLNIPIVIDHSVSVMSDFAAGANVDDKHYFGINWERDLPLAQVADIRNVVEGEPTPDGSGIYAMARGIEVGHIFQLGTNYSKSMNATVLDENGKSQVLLMGCYGVGVSRIVAAAIEQNFDDRGIIWPEAIAPFSVGILPMNMHKSHRVTDIAEQLYKDLNEAGIDVLLDDRKERPGVMFADMELIGIPHTVVIGDRNIDAGVFEYKNRRTGEKQDIPFDQLLDFLKNAVKG</sequence>
<gene>
    <name evidence="1" type="primary">proS</name>
    <name type="ordered locus">Sbal195_3002</name>
</gene>
<keyword id="KW-0030">Aminoacyl-tRNA synthetase</keyword>
<keyword id="KW-0067">ATP-binding</keyword>
<keyword id="KW-0963">Cytoplasm</keyword>
<keyword id="KW-0436">Ligase</keyword>
<keyword id="KW-0547">Nucleotide-binding</keyword>
<keyword id="KW-0648">Protein biosynthesis</keyword>
<dbReference type="EC" id="6.1.1.15" evidence="1"/>
<dbReference type="EMBL" id="CP000891">
    <property type="protein sequence ID" value="ABX50167.1"/>
    <property type="molecule type" value="Genomic_DNA"/>
</dbReference>
<dbReference type="RefSeq" id="WP_006085550.1">
    <property type="nucleotide sequence ID" value="NC_009997.1"/>
</dbReference>
<dbReference type="SMR" id="A9KVR8"/>
<dbReference type="KEGG" id="sbn:Sbal195_3002"/>
<dbReference type="HOGENOM" id="CLU_016739_0_0_6"/>
<dbReference type="Proteomes" id="UP000000770">
    <property type="component" value="Chromosome"/>
</dbReference>
<dbReference type="GO" id="GO:0005829">
    <property type="term" value="C:cytosol"/>
    <property type="evidence" value="ECO:0007669"/>
    <property type="project" value="TreeGrafter"/>
</dbReference>
<dbReference type="GO" id="GO:0002161">
    <property type="term" value="F:aminoacyl-tRNA deacylase activity"/>
    <property type="evidence" value="ECO:0007669"/>
    <property type="project" value="InterPro"/>
</dbReference>
<dbReference type="GO" id="GO:0005524">
    <property type="term" value="F:ATP binding"/>
    <property type="evidence" value="ECO:0007669"/>
    <property type="project" value="UniProtKB-UniRule"/>
</dbReference>
<dbReference type="GO" id="GO:0004827">
    <property type="term" value="F:proline-tRNA ligase activity"/>
    <property type="evidence" value="ECO:0007669"/>
    <property type="project" value="UniProtKB-UniRule"/>
</dbReference>
<dbReference type="GO" id="GO:0006433">
    <property type="term" value="P:prolyl-tRNA aminoacylation"/>
    <property type="evidence" value="ECO:0007669"/>
    <property type="project" value="UniProtKB-UniRule"/>
</dbReference>
<dbReference type="CDD" id="cd04334">
    <property type="entry name" value="ProRS-INS"/>
    <property type="match status" value="1"/>
</dbReference>
<dbReference type="CDD" id="cd00861">
    <property type="entry name" value="ProRS_anticodon_short"/>
    <property type="match status" value="1"/>
</dbReference>
<dbReference type="CDD" id="cd00779">
    <property type="entry name" value="ProRS_core_prok"/>
    <property type="match status" value="1"/>
</dbReference>
<dbReference type="FunFam" id="3.30.930.10:FF:000043">
    <property type="entry name" value="Proline--tRNA ligase"/>
    <property type="match status" value="1"/>
</dbReference>
<dbReference type="FunFam" id="3.30.930.10:FF:000062">
    <property type="entry name" value="Proline--tRNA ligase"/>
    <property type="match status" value="1"/>
</dbReference>
<dbReference type="FunFam" id="3.40.50.800:FF:000006">
    <property type="entry name" value="Proline--tRNA ligase"/>
    <property type="match status" value="1"/>
</dbReference>
<dbReference type="FunFam" id="3.90.960.10:FF:000001">
    <property type="entry name" value="Proline--tRNA ligase"/>
    <property type="match status" value="1"/>
</dbReference>
<dbReference type="Gene3D" id="3.40.50.800">
    <property type="entry name" value="Anticodon-binding domain"/>
    <property type="match status" value="1"/>
</dbReference>
<dbReference type="Gene3D" id="3.30.930.10">
    <property type="entry name" value="Bira Bifunctional Protein, Domain 2"/>
    <property type="match status" value="2"/>
</dbReference>
<dbReference type="Gene3D" id="3.90.960.10">
    <property type="entry name" value="YbaK/aminoacyl-tRNA synthetase-associated domain"/>
    <property type="match status" value="1"/>
</dbReference>
<dbReference type="HAMAP" id="MF_01569">
    <property type="entry name" value="Pro_tRNA_synth_type1"/>
    <property type="match status" value="1"/>
</dbReference>
<dbReference type="InterPro" id="IPR002314">
    <property type="entry name" value="aa-tRNA-synt_IIb"/>
</dbReference>
<dbReference type="InterPro" id="IPR006195">
    <property type="entry name" value="aa-tRNA-synth_II"/>
</dbReference>
<dbReference type="InterPro" id="IPR045864">
    <property type="entry name" value="aa-tRNA-synth_II/BPL/LPL"/>
</dbReference>
<dbReference type="InterPro" id="IPR004154">
    <property type="entry name" value="Anticodon-bd"/>
</dbReference>
<dbReference type="InterPro" id="IPR036621">
    <property type="entry name" value="Anticodon-bd_dom_sf"/>
</dbReference>
<dbReference type="InterPro" id="IPR002316">
    <property type="entry name" value="Pro-tRNA-ligase_IIa"/>
</dbReference>
<dbReference type="InterPro" id="IPR004500">
    <property type="entry name" value="Pro-tRNA-synth_IIa_bac-type"/>
</dbReference>
<dbReference type="InterPro" id="IPR023717">
    <property type="entry name" value="Pro-tRNA-Synthase_IIa_type1"/>
</dbReference>
<dbReference type="InterPro" id="IPR050062">
    <property type="entry name" value="Pro-tRNA_synthetase"/>
</dbReference>
<dbReference type="InterPro" id="IPR044140">
    <property type="entry name" value="ProRS_anticodon_short"/>
</dbReference>
<dbReference type="InterPro" id="IPR033730">
    <property type="entry name" value="ProRS_core_prok"/>
</dbReference>
<dbReference type="InterPro" id="IPR036754">
    <property type="entry name" value="YbaK/aa-tRNA-synt-asso_dom_sf"/>
</dbReference>
<dbReference type="InterPro" id="IPR007214">
    <property type="entry name" value="YbaK/aa-tRNA-synth-assoc-dom"/>
</dbReference>
<dbReference type="NCBIfam" id="NF006625">
    <property type="entry name" value="PRK09194.1"/>
    <property type="match status" value="1"/>
</dbReference>
<dbReference type="NCBIfam" id="TIGR00409">
    <property type="entry name" value="proS_fam_II"/>
    <property type="match status" value="1"/>
</dbReference>
<dbReference type="PANTHER" id="PTHR42753">
    <property type="entry name" value="MITOCHONDRIAL RIBOSOME PROTEIN L39/PROLYL-TRNA LIGASE FAMILY MEMBER"/>
    <property type="match status" value="1"/>
</dbReference>
<dbReference type="PANTHER" id="PTHR42753:SF2">
    <property type="entry name" value="PROLINE--TRNA LIGASE"/>
    <property type="match status" value="1"/>
</dbReference>
<dbReference type="Pfam" id="PF03129">
    <property type="entry name" value="HGTP_anticodon"/>
    <property type="match status" value="1"/>
</dbReference>
<dbReference type="Pfam" id="PF00587">
    <property type="entry name" value="tRNA-synt_2b"/>
    <property type="match status" value="1"/>
</dbReference>
<dbReference type="Pfam" id="PF04073">
    <property type="entry name" value="tRNA_edit"/>
    <property type="match status" value="1"/>
</dbReference>
<dbReference type="PIRSF" id="PIRSF001535">
    <property type="entry name" value="ProRS_1"/>
    <property type="match status" value="1"/>
</dbReference>
<dbReference type="PRINTS" id="PR01046">
    <property type="entry name" value="TRNASYNTHPRO"/>
</dbReference>
<dbReference type="SUPFAM" id="SSF52954">
    <property type="entry name" value="Class II aaRS ABD-related"/>
    <property type="match status" value="1"/>
</dbReference>
<dbReference type="SUPFAM" id="SSF55681">
    <property type="entry name" value="Class II aaRS and biotin synthetases"/>
    <property type="match status" value="1"/>
</dbReference>
<dbReference type="SUPFAM" id="SSF55826">
    <property type="entry name" value="YbaK/ProRS associated domain"/>
    <property type="match status" value="1"/>
</dbReference>
<dbReference type="PROSITE" id="PS50862">
    <property type="entry name" value="AA_TRNA_LIGASE_II"/>
    <property type="match status" value="1"/>
</dbReference>
<accession>A9KVR8</accession>
<evidence type="ECO:0000255" key="1">
    <source>
        <dbReference type="HAMAP-Rule" id="MF_01569"/>
    </source>
</evidence>
<feature type="chain" id="PRO_1000087853" description="Proline--tRNA ligase">
    <location>
        <begin position="1"/>
        <end position="571"/>
    </location>
</feature>
<reference key="1">
    <citation type="submission" date="2007-11" db="EMBL/GenBank/DDBJ databases">
        <title>Complete sequence of chromosome of Shewanella baltica OS195.</title>
        <authorList>
            <consortium name="US DOE Joint Genome Institute"/>
            <person name="Copeland A."/>
            <person name="Lucas S."/>
            <person name="Lapidus A."/>
            <person name="Barry K."/>
            <person name="Glavina del Rio T."/>
            <person name="Dalin E."/>
            <person name="Tice H."/>
            <person name="Pitluck S."/>
            <person name="Chain P."/>
            <person name="Malfatti S."/>
            <person name="Shin M."/>
            <person name="Vergez L."/>
            <person name="Schmutz J."/>
            <person name="Larimer F."/>
            <person name="Land M."/>
            <person name="Hauser L."/>
            <person name="Kyrpides N."/>
            <person name="Kim E."/>
            <person name="Brettar I."/>
            <person name="Rodrigues J."/>
            <person name="Konstantinidis K."/>
            <person name="Klappenbach J."/>
            <person name="Hofle M."/>
            <person name="Tiedje J."/>
            <person name="Richardson P."/>
        </authorList>
    </citation>
    <scope>NUCLEOTIDE SEQUENCE [LARGE SCALE GENOMIC DNA]</scope>
    <source>
        <strain>OS195</strain>
    </source>
</reference>
<proteinExistence type="inferred from homology"/>